<gene>
    <name evidence="1" type="primary">psaJ</name>
</gene>
<evidence type="ECO:0000255" key="1">
    <source>
        <dbReference type="HAMAP-Rule" id="MF_00522"/>
    </source>
</evidence>
<proteinExistence type="inferred from homology"/>
<organism>
    <name type="scientific">Helianthus annuus</name>
    <name type="common">Common sunflower</name>
    <dbReference type="NCBI Taxonomy" id="4232"/>
    <lineage>
        <taxon>Eukaryota</taxon>
        <taxon>Viridiplantae</taxon>
        <taxon>Streptophyta</taxon>
        <taxon>Embryophyta</taxon>
        <taxon>Tracheophyta</taxon>
        <taxon>Spermatophyta</taxon>
        <taxon>Magnoliopsida</taxon>
        <taxon>eudicotyledons</taxon>
        <taxon>Gunneridae</taxon>
        <taxon>Pentapetalae</taxon>
        <taxon>asterids</taxon>
        <taxon>campanulids</taxon>
        <taxon>Asterales</taxon>
        <taxon>Asteraceae</taxon>
        <taxon>Asteroideae</taxon>
        <taxon>Heliantheae alliance</taxon>
        <taxon>Heliantheae</taxon>
        <taxon>Helianthus</taxon>
    </lineage>
</organism>
<sequence>MRDLKTYLSVAPVLSTLWFGALAGLLIEINRFFPDALTFPFF</sequence>
<dbReference type="EMBL" id="DQ383815">
    <property type="protein sequence ID" value="ABD47166.1"/>
    <property type="molecule type" value="Genomic_DNA"/>
</dbReference>
<dbReference type="RefSeq" id="YP_588137.1">
    <property type="nucleotide sequence ID" value="NC_007977.1"/>
</dbReference>
<dbReference type="SMR" id="Q1KXT9"/>
<dbReference type="GeneID" id="4055676"/>
<dbReference type="KEGG" id="han:4055676"/>
<dbReference type="OrthoDB" id="1844838at2759"/>
<dbReference type="GO" id="GO:0009535">
    <property type="term" value="C:chloroplast thylakoid membrane"/>
    <property type="evidence" value="ECO:0007669"/>
    <property type="project" value="UniProtKB-SubCell"/>
</dbReference>
<dbReference type="GO" id="GO:0009522">
    <property type="term" value="C:photosystem I"/>
    <property type="evidence" value="ECO:0007669"/>
    <property type="project" value="UniProtKB-KW"/>
</dbReference>
<dbReference type="GO" id="GO:0015979">
    <property type="term" value="P:photosynthesis"/>
    <property type="evidence" value="ECO:0007669"/>
    <property type="project" value="UniProtKB-UniRule"/>
</dbReference>
<dbReference type="FunFam" id="1.20.5.510:FF:000001">
    <property type="entry name" value="Photosystem I reaction center subunit IX"/>
    <property type="match status" value="1"/>
</dbReference>
<dbReference type="Gene3D" id="1.20.5.510">
    <property type="entry name" value="Single helix bin"/>
    <property type="match status" value="1"/>
</dbReference>
<dbReference type="HAMAP" id="MF_00522">
    <property type="entry name" value="PSI_PsaJ"/>
    <property type="match status" value="1"/>
</dbReference>
<dbReference type="InterPro" id="IPR002615">
    <property type="entry name" value="PSI_PsaJ"/>
</dbReference>
<dbReference type="InterPro" id="IPR036062">
    <property type="entry name" value="PSI_PsaJ_sf"/>
</dbReference>
<dbReference type="PANTHER" id="PTHR36082">
    <property type="match status" value="1"/>
</dbReference>
<dbReference type="PANTHER" id="PTHR36082:SF2">
    <property type="entry name" value="PHOTOSYSTEM I REACTION CENTER SUBUNIT IX"/>
    <property type="match status" value="1"/>
</dbReference>
<dbReference type="Pfam" id="PF01701">
    <property type="entry name" value="PSI_PsaJ"/>
    <property type="match status" value="1"/>
</dbReference>
<dbReference type="SUPFAM" id="SSF81544">
    <property type="entry name" value="Subunit IX of photosystem I reaction centre, PsaJ"/>
    <property type="match status" value="1"/>
</dbReference>
<geneLocation type="chloroplast"/>
<accession>Q1KXT9</accession>
<keyword id="KW-0150">Chloroplast</keyword>
<keyword id="KW-0472">Membrane</keyword>
<keyword id="KW-0602">Photosynthesis</keyword>
<keyword id="KW-0603">Photosystem I</keyword>
<keyword id="KW-0934">Plastid</keyword>
<keyword id="KW-0793">Thylakoid</keyword>
<keyword id="KW-0812">Transmembrane</keyword>
<keyword id="KW-1133">Transmembrane helix</keyword>
<name>PSAJ_HELAN</name>
<comment type="function">
    <text evidence="1">May help in the organization of the PsaE and PsaF subunits.</text>
</comment>
<comment type="subcellular location">
    <subcellularLocation>
        <location evidence="1">Plastid</location>
        <location evidence="1">Chloroplast thylakoid membrane</location>
        <topology evidence="1">Single-pass membrane protein</topology>
    </subcellularLocation>
</comment>
<comment type="similarity">
    <text evidence="1">Belongs to the PsaJ family.</text>
</comment>
<feature type="chain" id="PRO_0000276060" description="Photosystem I reaction center subunit IX">
    <location>
        <begin position="1"/>
        <end position="42"/>
    </location>
</feature>
<feature type="transmembrane region" description="Helical" evidence="1">
    <location>
        <begin position="7"/>
        <end position="27"/>
    </location>
</feature>
<reference key="1">
    <citation type="submission" date="2006-01" db="EMBL/GenBank/DDBJ databases">
        <title>A comparison of the first two published chloroplast genomes in Asteraceae: Lactuca and Helianthus.</title>
        <authorList>
            <person name="Timme R.E."/>
            <person name="Kuehl J.V."/>
            <person name="Boore J.L."/>
            <person name="Jansen R.K."/>
        </authorList>
    </citation>
    <scope>NUCLEOTIDE SEQUENCE [LARGE SCALE GENOMIC DNA]</scope>
    <source>
        <strain>cv. HA383</strain>
    </source>
</reference>
<protein>
    <recommendedName>
        <fullName evidence="1">Photosystem I reaction center subunit IX</fullName>
    </recommendedName>
    <alternativeName>
        <fullName evidence="1">PSI-J</fullName>
    </alternativeName>
</protein>